<comment type="function">
    <text evidence="1 2">Activates phosphatidylinositol 3-kinase when bound to the regulatory p85 subunit. May mediate the control of various cellular processes by insulin-like peptides. When phosphorylated by the insulin receptor binds specifically to various cellular proteins containing SH2 domains. Involved in control of cell proliferation, cell size, and body and organ growth throughout development. Also has a role in a signaling pathway controlling the physiological response required to endure periods of low nutrient conditions. Insulin/insulin-like growth factor (IGF) signaling pathway has a role in regulating aging and is necessary in the ovary for vitellogenic maturation (By similarity).</text>
</comment>
<comment type="subunit">
    <text evidence="2">Bindings to phosphatidylinositol 3-kinase and SHP2.</text>
</comment>
<feature type="chain" id="PRO_0000395320" description="Insulin receptor substrate 1">
    <location>
        <begin position="1"/>
        <end position="948"/>
    </location>
</feature>
<feature type="domain" description="PH" evidence="4">
    <location>
        <begin position="8"/>
        <end position="109"/>
    </location>
</feature>
<feature type="domain" description="IRS-type PTB" evidence="5">
    <location>
        <begin position="122"/>
        <end position="236"/>
    </location>
</feature>
<feature type="region of interest" description="Disordered" evidence="6">
    <location>
        <begin position="247"/>
        <end position="270"/>
    </location>
</feature>
<feature type="region of interest" description="Disordered" evidence="6">
    <location>
        <begin position="304"/>
        <end position="373"/>
    </location>
</feature>
<feature type="region of interest" description="Disordered" evidence="6">
    <location>
        <begin position="528"/>
        <end position="559"/>
    </location>
</feature>
<feature type="region of interest" description="Disordered" evidence="6">
    <location>
        <begin position="703"/>
        <end position="734"/>
    </location>
</feature>
<feature type="region of interest" description="Disordered" evidence="6">
    <location>
        <begin position="907"/>
        <end position="948"/>
    </location>
</feature>
<feature type="short sequence motif" description="YXXM motif 1" evidence="3">
    <location>
        <begin position="410"/>
        <end position="413"/>
    </location>
</feature>
<feature type="short sequence motif" description="YXXM motif 2" evidence="3">
    <location>
        <begin position="640"/>
        <end position="643"/>
    </location>
</feature>
<feature type="compositionally biased region" description="Polar residues" evidence="6">
    <location>
        <begin position="304"/>
        <end position="329"/>
    </location>
</feature>
<feature type="compositionally biased region" description="Polar residues" evidence="6">
    <location>
        <begin position="529"/>
        <end position="556"/>
    </location>
</feature>
<feature type="compositionally biased region" description="Basic and acidic residues" evidence="6">
    <location>
        <begin position="720"/>
        <end position="731"/>
    </location>
</feature>
<feature type="compositionally biased region" description="Low complexity" evidence="6">
    <location>
        <begin position="936"/>
        <end position="948"/>
    </location>
</feature>
<feature type="modified residue" description="Phosphoserine" evidence="2">
    <location>
        <position position="286"/>
    </location>
</feature>
<feature type="modified residue" description="Phosphoserine" evidence="2">
    <location>
        <position position="287"/>
    </location>
</feature>
<feature type="modified residue" description="Phosphoserine" evidence="2">
    <location>
        <position position="342"/>
    </location>
</feature>
<feature type="modified residue" description="Phosphotyrosine; by INSR" evidence="1">
    <location>
        <position position="410"/>
    </location>
</feature>
<feature type="modified residue" description="Phosphoserine" evidence="2">
    <location>
        <position position="554"/>
    </location>
</feature>
<feature type="modified residue" description="Phosphotyrosine; by INSR" evidence="1">
    <location>
        <position position="891"/>
    </location>
</feature>
<feature type="modified residue" description="Phosphoserine" evidence="2">
    <location>
        <position position="912"/>
    </location>
</feature>
<feature type="modified residue" description="Phosphoserine" evidence="2">
    <location>
        <position position="915"/>
    </location>
</feature>
<feature type="modified residue" description="Phosphotyrosine; by INSR" evidence="1">
    <location>
        <position position="928"/>
    </location>
</feature>
<evidence type="ECO:0000250" key="1">
    <source>
        <dbReference type="UniProtKB" id="P35570"/>
    </source>
</evidence>
<evidence type="ECO:0000250" key="2">
    <source>
        <dbReference type="UniProtKB" id="Q9XTN2"/>
    </source>
</evidence>
<evidence type="ECO:0000255" key="3"/>
<evidence type="ECO:0000255" key="4">
    <source>
        <dbReference type="PROSITE-ProRule" id="PRU00145"/>
    </source>
</evidence>
<evidence type="ECO:0000255" key="5">
    <source>
        <dbReference type="PROSITE-ProRule" id="PRU00389"/>
    </source>
</evidence>
<evidence type="ECO:0000256" key="6">
    <source>
        <dbReference type="SAM" id="MobiDB-lite"/>
    </source>
</evidence>
<evidence type="ECO:0000312" key="7">
    <source>
        <dbReference type="EMBL" id="EDV58481.1"/>
    </source>
</evidence>
<keyword id="KW-0221">Differentiation</keyword>
<keyword id="KW-0341">Growth regulation</keyword>
<keyword id="KW-0896">Oogenesis</keyword>
<keyword id="KW-0597">Phosphoprotein</keyword>
<keyword id="KW-0677">Repeat</keyword>
<accession>B3N946</accession>
<organism>
    <name type="scientific">Drosophila erecta</name>
    <name type="common">Fruit fly</name>
    <dbReference type="NCBI Taxonomy" id="7220"/>
    <lineage>
        <taxon>Eukaryota</taxon>
        <taxon>Metazoa</taxon>
        <taxon>Ecdysozoa</taxon>
        <taxon>Arthropoda</taxon>
        <taxon>Hexapoda</taxon>
        <taxon>Insecta</taxon>
        <taxon>Pterygota</taxon>
        <taxon>Neoptera</taxon>
        <taxon>Endopterygota</taxon>
        <taxon>Diptera</taxon>
        <taxon>Brachycera</taxon>
        <taxon>Muscomorpha</taxon>
        <taxon>Ephydroidea</taxon>
        <taxon>Drosophilidae</taxon>
        <taxon>Drosophila</taxon>
        <taxon>Sophophora</taxon>
    </lineage>
</organism>
<dbReference type="EMBL" id="CH954177">
    <property type="protein sequence ID" value="EDV58481.1"/>
    <property type="molecule type" value="Genomic_DNA"/>
</dbReference>
<dbReference type="SMR" id="B3N946"/>
<dbReference type="EnsemblMetazoa" id="FBtr0144019">
    <property type="protein sequence ID" value="FBpp0142511"/>
    <property type="gene ID" value="FBgn0116104"/>
</dbReference>
<dbReference type="EnsemblMetazoa" id="FBtr0406929">
    <property type="protein sequence ID" value="FBpp0365490"/>
    <property type="gene ID" value="FBgn0116104"/>
</dbReference>
<dbReference type="EnsemblMetazoa" id="XM_001969386.3">
    <property type="protein sequence ID" value="XP_001969422.1"/>
    <property type="gene ID" value="LOC6542588"/>
</dbReference>
<dbReference type="EnsemblMetazoa" id="XM_015159500.2">
    <property type="protein sequence ID" value="XP_015014986.1"/>
    <property type="gene ID" value="LOC6542588"/>
</dbReference>
<dbReference type="EnsemblMetazoa" id="XM_026978292.1">
    <property type="protein sequence ID" value="XP_026834093.1"/>
    <property type="gene ID" value="LOC6542588"/>
</dbReference>
<dbReference type="EnsemblMetazoa" id="XM_026978293.1">
    <property type="protein sequence ID" value="XP_026834094.1"/>
    <property type="gene ID" value="LOC6542588"/>
</dbReference>
<dbReference type="GeneID" id="6542588"/>
<dbReference type="KEGG" id="der:6542588"/>
<dbReference type="CTD" id="30067"/>
<dbReference type="eggNOG" id="ENOG502QUNU">
    <property type="taxonomic scope" value="Eukaryota"/>
</dbReference>
<dbReference type="HOGENOM" id="CLU_012544_0_0_1"/>
<dbReference type="OMA" id="RNCSSPH"/>
<dbReference type="OrthoDB" id="946068at2759"/>
<dbReference type="PhylomeDB" id="B3N946"/>
<dbReference type="ChiTaRS" id="chico">
    <property type="organism name" value="fly"/>
</dbReference>
<dbReference type="Proteomes" id="UP000008711">
    <property type="component" value="Unassembled WGS sequence"/>
</dbReference>
<dbReference type="GO" id="GO:0005938">
    <property type="term" value="C:cell cortex"/>
    <property type="evidence" value="ECO:0007669"/>
    <property type="project" value="EnsemblMetazoa"/>
</dbReference>
<dbReference type="GO" id="GO:0005737">
    <property type="term" value="C:cytoplasm"/>
    <property type="evidence" value="ECO:0000250"/>
    <property type="project" value="UniProtKB"/>
</dbReference>
<dbReference type="GO" id="GO:0005829">
    <property type="term" value="C:cytosol"/>
    <property type="evidence" value="ECO:0007669"/>
    <property type="project" value="EnsemblMetazoa"/>
</dbReference>
<dbReference type="GO" id="GO:0043231">
    <property type="term" value="C:intracellular membrane-bounded organelle"/>
    <property type="evidence" value="ECO:0000250"/>
    <property type="project" value="UniProtKB"/>
</dbReference>
<dbReference type="GO" id="GO:0005634">
    <property type="term" value="C:nucleus"/>
    <property type="evidence" value="ECO:0000250"/>
    <property type="project" value="UniProtKB"/>
</dbReference>
<dbReference type="GO" id="GO:0005886">
    <property type="term" value="C:plasma membrane"/>
    <property type="evidence" value="ECO:0007669"/>
    <property type="project" value="TreeGrafter"/>
</dbReference>
<dbReference type="GO" id="GO:0005158">
    <property type="term" value="F:insulin receptor binding"/>
    <property type="evidence" value="ECO:0000250"/>
    <property type="project" value="UniProtKB"/>
</dbReference>
<dbReference type="GO" id="GO:0005159">
    <property type="term" value="F:insulin-like growth factor receptor binding"/>
    <property type="evidence" value="ECO:0000250"/>
    <property type="project" value="UniProtKB"/>
</dbReference>
<dbReference type="GO" id="GO:0043548">
    <property type="term" value="F:phosphatidylinositol 3-kinase binding"/>
    <property type="evidence" value="ECO:0007669"/>
    <property type="project" value="TreeGrafter"/>
</dbReference>
<dbReference type="GO" id="GO:0009267">
    <property type="term" value="P:cellular response to starvation"/>
    <property type="evidence" value="ECO:0007669"/>
    <property type="project" value="EnsemblMetazoa"/>
</dbReference>
<dbReference type="GO" id="GO:0008340">
    <property type="term" value="P:determination of adult lifespan"/>
    <property type="evidence" value="ECO:0007669"/>
    <property type="project" value="EnsemblMetazoa"/>
</dbReference>
<dbReference type="GO" id="GO:0060250">
    <property type="term" value="P:germ-line stem-cell niche homeostasis"/>
    <property type="evidence" value="ECO:0007669"/>
    <property type="project" value="EnsemblMetazoa"/>
</dbReference>
<dbReference type="GO" id="GO:0042593">
    <property type="term" value="P:glucose homeostasis"/>
    <property type="evidence" value="ECO:0007669"/>
    <property type="project" value="EnsemblMetazoa"/>
</dbReference>
<dbReference type="GO" id="GO:0007295">
    <property type="term" value="P:growth of a germarium-derived egg chamber"/>
    <property type="evidence" value="ECO:0007669"/>
    <property type="project" value="EnsemblMetazoa"/>
</dbReference>
<dbReference type="GO" id="GO:0008286">
    <property type="term" value="P:insulin receptor signaling pathway"/>
    <property type="evidence" value="ECO:0000250"/>
    <property type="project" value="UniProtKB"/>
</dbReference>
<dbReference type="GO" id="GO:0048009">
    <property type="term" value="P:insulin-like growth factor receptor signaling pathway"/>
    <property type="evidence" value="ECO:0000250"/>
    <property type="project" value="UniProtKB"/>
</dbReference>
<dbReference type="GO" id="GO:0055088">
    <property type="term" value="P:lipid homeostasis"/>
    <property type="evidence" value="ECO:0007669"/>
    <property type="project" value="EnsemblMetazoa"/>
</dbReference>
<dbReference type="GO" id="GO:0060291">
    <property type="term" value="P:long-term synaptic potentiation"/>
    <property type="evidence" value="ECO:0007669"/>
    <property type="project" value="EnsemblMetazoa"/>
</dbReference>
<dbReference type="GO" id="GO:0048133">
    <property type="term" value="P:male germ-line stem cell asymmetric division"/>
    <property type="evidence" value="ECO:0007669"/>
    <property type="project" value="EnsemblMetazoa"/>
</dbReference>
<dbReference type="GO" id="GO:0035264">
    <property type="term" value="P:multicellular organism growth"/>
    <property type="evidence" value="ECO:0007669"/>
    <property type="project" value="EnsemblMetazoa"/>
</dbReference>
<dbReference type="GO" id="GO:0061964">
    <property type="term" value="P:negative regulation of entry into reproductive diapause"/>
    <property type="evidence" value="ECO:0007669"/>
    <property type="project" value="EnsemblMetazoa"/>
</dbReference>
<dbReference type="GO" id="GO:0010897">
    <property type="term" value="P:negative regulation of triglyceride catabolic process"/>
    <property type="evidence" value="ECO:0007669"/>
    <property type="project" value="EnsemblMetazoa"/>
</dbReference>
<dbReference type="GO" id="GO:0008355">
    <property type="term" value="P:olfactory learning"/>
    <property type="evidence" value="ECO:0007669"/>
    <property type="project" value="EnsemblMetazoa"/>
</dbReference>
<dbReference type="GO" id="GO:1903688">
    <property type="term" value="P:positive regulation of border follicle cell migration"/>
    <property type="evidence" value="ECO:0007669"/>
    <property type="project" value="EnsemblMetazoa"/>
</dbReference>
<dbReference type="GO" id="GO:0008284">
    <property type="term" value="P:positive regulation of cell population proliferation"/>
    <property type="evidence" value="ECO:0007669"/>
    <property type="project" value="EnsemblMetazoa"/>
</dbReference>
<dbReference type="GO" id="GO:0045793">
    <property type="term" value="P:positive regulation of cell size"/>
    <property type="evidence" value="ECO:0007669"/>
    <property type="project" value="EnsemblMetazoa"/>
</dbReference>
<dbReference type="GO" id="GO:0050778">
    <property type="term" value="P:positive regulation of immune response"/>
    <property type="evidence" value="ECO:0007669"/>
    <property type="project" value="EnsemblMetazoa"/>
</dbReference>
<dbReference type="GO" id="GO:0040018">
    <property type="term" value="P:positive regulation of multicellular organism growth"/>
    <property type="evidence" value="ECO:0007669"/>
    <property type="project" value="EnsemblMetazoa"/>
</dbReference>
<dbReference type="GO" id="GO:0046622">
    <property type="term" value="P:positive regulation of organ growth"/>
    <property type="evidence" value="ECO:0007669"/>
    <property type="project" value="EnsemblMetazoa"/>
</dbReference>
<dbReference type="GO" id="GO:0051897">
    <property type="term" value="P:positive regulation of phosphatidylinositol 3-kinase/protein kinase B signal transduction"/>
    <property type="evidence" value="ECO:0007669"/>
    <property type="project" value="EnsemblMetazoa"/>
</dbReference>
<dbReference type="GO" id="GO:0007285">
    <property type="term" value="P:primary spermatocyte growth"/>
    <property type="evidence" value="ECO:0007669"/>
    <property type="project" value="EnsemblMetazoa"/>
</dbReference>
<dbReference type="GO" id="GO:0035159">
    <property type="term" value="P:regulation of tube length, open tracheal system"/>
    <property type="evidence" value="ECO:0007669"/>
    <property type="project" value="EnsemblMetazoa"/>
</dbReference>
<dbReference type="GO" id="GO:0034059">
    <property type="term" value="P:response to anoxia"/>
    <property type="evidence" value="ECO:0007669"/>
    <property type="project" value="EnsemblMetazoa"/>
</dbReference>
<dbReference type="GO" id="GO:0007296">
    <property type="term" value="P:vitellogenesis"/>
    <property type="evidence" value="ECO:0000250"/>
    <property type="project" value="UniProtKB"/>
</dbReference>
<dbReference type="CDD" id="cd01257">
    <property type="entry name" value="PH_IRS"/>
    <property type="match status" value="1"/>
</dbReference>
<dbReference type="CDD" id="cd01204">
    <property type="entry name" value="PTB_IRS"/>
    <property type="match status" value="1"/>
</dbReference>
<dbReference type="FunFam" id="2.30.29.30:FF:000441">
    <property type="entry name" value="Insulin receptor substrate 1"/>
    <property type="match status" value="1"/>
</dbReference>
<dbReference type="FunFam" id="2.30.29.30:FF:000457">
    <property type="entry name" value="Insulin receptor substrate 1"/>
    <property type="match status" value="1"/>
</dbReference>
<dbReference type="Gene3D" id="2.30.29.30">
    <property type="entry name" value="Pleckstrin-homology domain (PH domain)/Phosphotyrosine-binding domain (PTB)"/>
    <property type="match status" value="2"/>
</dbReference>
<dbReference type="InterPro" id="IPR039011">
    <property type="entry name" value="IRS"/>
</dbReference>
<dbReference type="InterPro" id="IPR002404">
    <property type="entry name" value="IRS_PTB"/>
</dbReference>
<dbReference type="InterPro" id="IPR011993">
    <property type="entry name" value="PH-like_dom_sf"/>
</dbReference>
<dbReference type="InterPro" id="IPR001849">
    <property type="entry name" value="PH_domain"/>
</dbReference>
<dbReference type="PANTHER" id="PTHR10614">
    <property type="entry name" value="INSULIN RECEPTOR SUBSTRATE"/>
    <property type="match status" value="1"/>
</dbReference>
<dbReference type="PANTHER" id="PTHR10614:SF13">
    <property type="entry name" value="INSULIN RECEPTOR SUBSTRATE 1"/>
    <property type="match status" value="1"/>
</dbReference>
<dbReference type="Pfam" id="PF02174">
    <property type="entry name" value="IRS"/>
    <property type="match status" value="1"/>
</dbReference>
<dbReference type="PRINTS" id="PR00628">
    <property type="entry name" value="INSULINRSI"/>
</dbReference>
<dbReference type="SMART" id="SM01244">
    <property type="entry name" value="IRS"/>
    <property type="match status" value="1"/>
</dbReference>
<dbReference type="SMART" id="SM00233">
    <property type="entry name" value="PH"/>
    <property type="match status" value="1"/>
</dbReference>
<dbReference type="SMART" id="SM00310">
    <property type="entry name" value="PTBI"/>
    <property type="match status" value="1"/>
</dbReference>
<dbReference type="SUPFAM" id="SSF50729">
    <property type="entry name" value="PH domain-like"/>
    <property type="match status" value="2"/>
</dbReference>
<dbReference type="PROSITE" id="PS51064">
    <property type="entry name" value="IRS_PTB"/>
    <property type="match status" value="1"/>
</dbReference>
<dbReference type="PROSITE" id="PS50003">
    <property type="entry name" value="PH_DOMAIN"/>
    <property type="match status" value="1"/>
</dbReference>
<proteinExistence type="inferred from homology"/>
<protein>
    <recommendedName>
        <fullName evidence="2">Insulin receptor substrate 1</fullName>
    </recommendedName>
    <alternativeName>
        <fullName evidence="2">Protein chico</fullName>
    </alternativeName>
</protein>
<gene>
    <name evidence="2" type="primary">chico</name>
    <name type="ORF">GG23965</name>
</gene>
<reference evidence="7" key="1">
    <citation type="journal article" date="2007" name="Nature">
        <title>Evolution of genes and genomes on the Drosophila phylogeny.</title>
        <authorList>
            <consortium name="Drosophila 12 genomes consortium"/>
        </authorList>
    </citation>
    <scope>NUCLEOTIDE SEQUENCE [LARGE SCALE GENOMIC DNA]</scope>
    <source>
        <strain evidence="7">Tucson 14021-0224.01</strain>
    </source>
</reference>
<name>IRS1_DROER</name>
<sequence length="948" mass="105969">MASISDDGMALSGYLKKLKTMKKKFFVLYEETSNSSARLEYYDTEKKFLQRAEPKRVIYLKNCFNINRRLDTKQRFVIVLSSRDGGFGIVLESENDLRKWLDKLLVLQRNIANTNGTAYSPYDQVWQVVIQKKGISEKVGITGTYHCCLTSKSLTFVCIGPDKTPNGEERVASIEILLTTIRRCGHASPQCIFYVELGRQSVLGSGDLWMETDNAAVATNMHNTILSAMSAKTESNTNLINVYQNRPDLSHEPMRKRSSSANEASKPINVNVIQNSQNSLDLRSCSSPHNYGFGRERCDSLPTRNGTLSESSNQTYFGSNHGLRSNTISGIRPHSSNKHSNSPTFTMPLRCSASEESSISIEESDDNGSFSHYRLNTRSSETAIPEENIDDFASAEFSKVSEQNESDENYIPMTPINPTDAIHEKEKVDMQRLEDGSLHFDFPEHASEKLARDFDLDSDNQCGRPIRAYSIGNKVEHLKFNKRLGHLNDTGQNPNRVRAYSVGSKSKIPRCDLQRVVLVEDNKHEFAANRSQSSITKEGTSYSTSSNRQKKSTSAPLLSLKNHINSDRMSDLMEIDFSQATNLEKQKFIKNNEIPKYIENVFPKTPRTDSSSLTLHATSQKDIFNGTKLNNTVNASEEGYLEMKPVGNAYTPSSNCLPIKVEKLKISDYTAPLTTAAPVHDLNKISAYNISAEKWKEQSLCEEKKSNSPLNETPCSLKPTDVESNSHDEHSTNNMECEVSVQCDKQNNLDDKVAENNNLDIGGHEEKKLVHSISSEDYTQIKDKSNDFTKFNEAGYKILQIKSDSSLISLKLYQKGIHKDNLERSHRLTESVNTIPDNATASSSVTKFNINTKAADSRSTDPSTPQNILQIKDLNFPSRSSSRISQPELHYASLDLPHCSGQNPAKYLKRGSRESPPVSACPGDGNTYAKIDFDQSDSSSSSSNIFNT</sequence>